<name>Y736_CHLTR</name>
<feature type="chain" id="PRO_0000137904" description="UPF0098 protein CT_736">
    <location>
        <begin position="1"/>
        <end position="150"/>
    </location>
</feature>
<feature type="strand" evidence="2">
    <location>
        <begin position="2"/>
        <end position="5"/>
    </location>
</feature>
<feature type="helix" evidence="2">
    <location>
        <begin position="16"/>
        <end position="18"/>
    </location>
</feature>
<feature type="strand" evidence="2">
    <location>
        <begin position="29"/>
        <end position="32"/>
    </location>
</feature>
<feature type="strand" evidence="2">
    <location>
        <begin position="40"/>
        <end position="47"/>
    </location>
</feature>
<feature type="turn" evidence="2">
    <location>
        <begin position="52"/>
        <end position="54"/>
    </location>
</feature>
<feature type="strand" evidence="2">
    <location>
        <begin position="60"/>
        <end position="68"/>
    </location>
</feature>
<feature type="strand" evidence="2">
    <location>
        <begin position="82"/>
        <end position="85"/>
    </location>
</feature>
<feature type="strand" evidence="2">
    <location>
        <begin position="91"/>
        <end position="94"/>
    </location>
</feature>
<feature type="strand" evidence="2">
    <location>
        <begin position="101"/>
        <end position="103"/>
    </location>
</feature>
<feature type="strand" evidence="2">
    <location>
        <begin position="105"/>
        <end position="116"/>
    </location>
</feature>
<feature type="helix" evidence="2">
    <location>
        <begin position="126"/>
        <end position="133"/>
    </location>
</feature>
<feature type="turn" evidence="2">
    <location>
        <begin position="134"/>
        <end position="136"/>
    </location>
</feature>
<feature type="strand" evidence="2">
    <location>
        <begin position="137"/>
        <end position="147"/>
    </location>
</feature>
<organism>
    <name type="scientific">Chlamydia trachomatis serovar D (strain ATCC VR-885 / DSM 19411 / UW-3/Cx)</name>
    <dbReference type="NCBI Taxonomy" id="272561"/>
    <lineage>
        <taxon>Bacteria</taxon>
        <taxon>Pseudomonadati</taxon>
        <taxon>Chlamydiota</taxon>
        <taxon>Chlamydiia</taxon>
        <taxon>Chlamydiales</taxon>
        <taxon>Chlamydiaceae</taxon>
        <taxon>Chlamydia/Chlamydophila group</taxon>
        <taxon>Chlamydia</taxon>
    </lineage>
</organism>
<keyword id="KW-0002">3D-structure</keyword>
<keyword id="KW-1185">Reference proteome</keyword>
<protein>
    <recommendedName>
        <fullName>UPF0098 protein CT_736</fullName>
    </recommendedName>
</protein>
<dbReference type="EMBL" id="AE001273">
    <property type="protein sequence ID" value="AAC68331.1"/>
    <property type="molecule type" value="Genomic_DNA"/>
</dbReference>
<dbReference type="PIR" id="G71477">
    <property type="entry name" value="G71477"/>
</dbReference>
<dbReference type="RefSeq" id="WP_009872113.1">
    <property type="nucleotide sequence ID" value="NC_000117.1"/>
</dbReference>
<dbReference type="PDB" id="3N08">
    <property type="method" value="X-ray"/>
    <property type="resolution" value="1.25 A"/>
    <property type="chains" value="A/B=1-150"/>
</dbReference>
<dbReference type="PDBsum" id="3N08"/>
<dbReference type="SMR" id="O84741"/>
<dbReference type="FunCoup" id="O84741">
    <property type="interactions" value="12"/>
</dbReference>
<dbReference type="STRING" id="272561.CT_736"/>
<dbReference type="EnsemblBacteria" id="AAC68331">
    <property type="protein sequence ID" value="AAC68331"/>
    <property type="gene ID" value="CT_736"/>
</dbReference>
<dbReference type="KEGG" id="ctr:CT_736"/>
<dbReference type="PATRIC" id="fig|272561.5.peg.809"/>
<dbReference type="HOGENOM" id="CLU_083918_3_2_0"/>
<dbReference type="InParanoid" id="O84741"/>
<dbReference type="OrthoDB" id="9797506at2"/>
<dbReference type="EvolutionaryTrace" id="O84741"/>
<dbReference type="Proteomes" id="UP000000431">
    <property type="component" value="Chromosome"/>
</dbReference>
<dbReference type="CDD" id="cd00865">
    <property type="entry name" value="PEBP_bact_arch"/>
    <property type="match status" value="1"/>
</dbReference>
<dbReference type="Gene3D" id="3.90.280.10">
    <property type="entry name" value="PEBP-like"/>
    <property type="match status" value="1"/>
</dbReference>
<dbReference type="InterPro" id="IPR008914">
    <property type="entry name" value="PEBP"/>
</dbReference>
<dbReference type="InterPro" id="IPR036610">
    <property type="entry name" value="PEBP-like_sf"/>
</dbReference>
<dbReference type="InterPro" id="IPR005247">
    <property type="entry name" value="YbhB_YbcL/LppC-like"/>
</dbReference>
<dbReference type="NCBIfam" id="TIGR00481">
    <property type="entry name" value="YbhB/YbcL family Raf kinase inhibitor-like protein"/>
    <property type="match status" value="1"/>
</dbReference>
<dbReference type="PANTHER" id="PTHR30289:SF1">
    <property type="entry name" value="PEBP (PHOSPHATIDYLETHANOLAMINE-BINDING PROTEIN) FAMILY PROTEIN"/>
    <property type="match status" value="1"/>
</dbReference>
<dbReference type="PANTHER" id="PTHR30289">
    <property type="entry name" value="UNCHARACTERIZED PROTEIN YBCL-RELATED"/>
    <property type="match status" value="1"/>
</dbReference>
<dbReference type="Pfam" id="PF01161">
    <property type="entry name" value="PBP"/>
    <property type="match status" value="1"/>
</dbReference>
<dbReference type="SUPFAM" id="SSF49777">
    <property type="entry name" value="PEBP-like"/>
    <property type="match status" value="1"/>
</dbReference>
<gene>
    <name type="ordered locus">CT_736</name>
</gene>
<proteinExistence type="evidence at protein level"/>
<reference key="1">
    <citation type="journal article" date="1998" name="Science">
        <title>Genome sequence of an obligate intracellular pathogen of humans: Chlamydia trachomatis.</title>
        <authorList>
            <person name="Stephens R.S."/>
            <person name="Kalman S."/>
            <person name="Lammel C.J."/>
            <person name="Fan J."/>
            <person name="Marathe R."/>
            <person name="Aravind L."/>
            <person name="Mitchell W.P."/>
            <person name="Olinger L."/>
            <person name="Tatusov R.L."/>
            <person name="Zhao Q."/>
            <person name="Koonin E.V."/>
            <person name="Davis R.W."/>
        </authorList>
    </citation>
    <scope>NUCLEOTIDE SEQUENCE [LARGE SCALE GENOMIC DNA]</scope>
    <source>
        <strain>ATCC VR-885 / DSM 19411 / UW-3/Cx</strain>
    </source>
</reference>
<evidence type="ECO:0000305" key="1"/>
<evidence type="ECO:0007829" key="2">
    <source>
        <dbReference type="PDB" id="3N08"/>
    </source>
</evidence>
<sequence length="150" mass="16508">MQLTSQAFSYGRPIPKKYSCQGVGISPPLSFSDVPREAKSLVLIVEDPDVPPSVREDGLWIHWIVYNLSPVVSNLAEGAQIFAVQGLNTAGEIGYCPPCPPDAKHRYYFYAYALDVVLSDEEGVTKEQLLEAMDGHIIATAELMGTYEKD</sequence>
<accession>O84741</accession>
<comment type="similarity">
    <text evidence="1">Belongs to the UPF0098 family.</text>
</comment>